<comment type="function">
    <text evidence="1">Binds together with bS18 to 16S ribosomal RNA.</text>
</comment>
<comment type="similarity">
    <text evidence="1">Belongs to the bacterial ribosomal protein bS6 family.</text>
</comment>
<evidence type="ECO:0000255" key="1">
    <source>
        <dbReference type="HAMAP-Rule" id="MF_00360"/>
    </source>
</evidence>
<evidence type="ECO:0000305" key="2"/>
<gene>
    <name evidence="1" type="primary">rpsF</name>
    <name type="ordered locus">Moth_0128</name>
</gene>
<protein>
    <recommendedName>
        <fullName evidence="1">Small ribosomal subunit protein bS6</fullName>
    </recommendedName>
    <alternativeName>
        <fullName evidence="2">30S ribosomal protein S6</fullName>
    </alternativeName>
</protein>
<feature type="chain" id="PRO_0000229549" description="Small ribosomal subunit protein bS6">
    <location>
        <begin position="1"/>
        <end position="98"/>
    </location>
</feature>
<organism>
    <name type="scientific">Moorella thermoacetica (strain ATCC 39073 / JCM 9320)</name>
    <dbReference type="NCBI Taxonomy" id="264732"/>
    <lineage>
        <taxon>Bacteria</taxon>
        <taxon>Bacillati</taxon>
        <taxon>Bacillota</taxon>
        <taxon>Clostridia</taxon>
        <taxon>Moorellales</taxon>
        <taxon>Moorellaceae</taxon>
        <taxon>Moorella</taxon>
    </lineage>
</organism>
<proteinExistence type="inferred from homology"/>
<sequence>MRNYEVVFVIRPDLEAEATTAVVEKFTQLITDQGGQVTRVDQWGKKRMAYEVRKYREGYYVLVEFKGTPAVAQELERVLKISDDVIRYLITRLEEEAS</sequence>
<name>RS6_MOOTA</name>
<reference key="1">
    <citation type="journal article" date="2008" name="Environ. Microbiol.">
        <title>The complete genome sequence of Moorella thermoacetica (f. Clostridium thermoaceticum).</title>
        <authorList>
            <person name="Pierce E."/>
            <person name="Xie G."/>
            <person name="Barabote R.D."/>
            <person name="Saunders E."/>
            <person name="Han C.S."/>
            <person name="Detter J.C."/>
            <person name="Richardson P."/>
            <person name="Brettin T.S."/>
            <person name="Das A."/>
            <person name="Ljungdahl L.G."/>
            <person name="Ragsdale S.W."/>
        </authorList>
    </citation>
    <scope>NUCLEOTIDE SEQUENCE [LARGE SCALE GENOMIC DNA]</scope>
    <source>
        <strain>ATCC 39073 / JCM 9320</strain>
    </source>
</reference>
<accession>Q2RM72</accession>
<keyword id="KW-0687">Ribonucleoprotein</keyword>
<keyword id="KW-0689">Ribosomal protein</keyword>
<keyword id="KW-0694">RNA-binding</keyword>
<keyword id="KW-0699">rRNA-binding</keyword>
<dbReference type="EMBL" id="CP000232">
    <property type="protein sequence ID" value="ABC18467.1"/>
    <property type="molecule type" value="Genomic_DNA"/>
</dbReference>
<dbReference type="RefSeq" id="YP_429010.1">
    <property type="nucleotide sequence ID" value="NC_007644.1"/>
</dbReference>
<dbReference type="SMR" id="Q2RM72"/>
<dbReference type="STRING" id="264732.Moth_0128"/>
<dbReference type="EnsemblBacteria" id="ABC18467">
    <property type="protein sequence ID" value="ABC18467"/>
    <property type="gene ID" value="Moth_0128"/>
</dbReference>
<dbReference type="KEGG" id="mta:Moth_0128"/>
<dbReference type="PATRIC" id="fig|264732.11.peg.133"/>
<dbReference type="eggNOG" id="COG0360">
    <property type="taxonomic scope" value="Bacteria"/>
</dbReference>
<dbReference type="HOGENOM" id="CLU_113441_5_3_9"/>
<dbReference type="OrthoDB" id="9812702at2"/>
<dbReference type="GO" id="GO:0005737">
    <property type="term" value="C:cytoplasm"/>
    <property type="evidence" value="ECO:0007669"/>
    <property type="project" value="UniProtKB-ARBA"/>
</dbReference>
<dbReference type="GO" id="GO:1990904">
    <property type="term" value="C:ribonucleoprotein complex"/>
    <property type="evidence" value="ECO:0007669"/>
    <property type="project" value="UniProtKB-KW"/>
</dbReference>
<dbReference type="GO" id="GO:0005840">
    <property type="term" value="C:ribosome"/>
    <property type="evidence" value="ECO:0007669"/>
    <property type="project" value="UniProtKB-KW"/>
</dbReference>
<dbReference type="GO" id="GO:0070181">
    <property type="term" value="F:small ribosomal subunit rRNA binding"/>
    <property type="evidence" value="ECO:0007669"/>
    <property type="project" value="TreeGrafter"/>
</dbReference>
<dbReference type="GO" id="GO:0003735">
    <property type="term" value="F:structural constituent of ribosome"/>
    <property type="evidence" value="ECO:0007669"/>
    <property type="project" value="InterPro"/>
</dbReference>
<dbReference type="GO" id="GO:0006412">
    <property type="term" value="P:translation"/>
    <property type="evidence" value="ECO:0007669"/>
    <property type="project" value="UniProtKB-UniRule"/>
</dbReference>
<dbReference type="CDD" id="cd00473">
    <property type="entry name" value="bS6"/>
    <property type="match status" value="1"/>
</dbReference>
<dbReference type="FunFam" id="3.30.70.60:FF:000002">
    <property type="entry name" value="30S ribosomal protein S6"/>
    <property type="match status" value="1"/>
</dbReference>
<dbReference type="Gene3D" id="3.30.70.60">
    <property type="match status" value="1"/>
</dbReference>
<dbReference type="HAMAP" id="MF_00360">
    <property type="entry name" value="Ribosomal_bS6"/>
    <property type="match status" value="1"/>
</dbReference>
<dbReference type="InterPro" id="IPR000529">
    <property type="entry name" value="Ribosomal_bS6"/>
</dbReference>
<dbReference type="InterPro" id="IPR035980">
    <property type="entry name" value="Ribosomal_bS6_sf"/>
</dbReference>
<dbReference type="InterPro" id="IPR020814">
    <property type="entry name" value="Ribosomal_S6_plastid/chlpt"/>
</dbReference>
<dbReference type="InterPro" id="IPR014717">
    <property type="entry name" value="Transl_elong_EF1B/ribsomal_bS6"/>
</dbReference>
<dbReference type="NCBIfam" id="TIGR00166">
    <property type="entry name" value="S6"/>
    <property type="match status" value="1"/>
</dbReference>
<dbReference type="PANTHER" id="PTHR21011">
    <property type="entry name" value="MITOCHONDRIAL 28S RIBOSOMAL PROTEIN S6"/>
    <property type="match status" value="1"/>
</dbReference>
<dbReference type="PANTHER" id="PTHR21011:SF1">
    <property type="entry name" value="SMALL RIBOSOMAL SUBUNIT PROTEIN BS6M"/>
    <property type="match status" value="1"/>
</dbReference>
<dbReference type="Pfam" id="PF01250">
    <property type="entry name" value="Ribosomal_S6"/>
    <property type="match status" value="1"/>
</dbReference>
<dbReference type="SUPFAM" id="SSF54995">
    <property type="entry name" value="Ribosomal protein S6"/>
    <property type="match status" value="1"/>
</dbReference>